<sequence>MSCRLLLYVSLCLVETALMNTKITQSPRYLILGRANKSLECEQHLGHNAMYWYKQSAEKPPELMFLYNLKQLIRNETVPSRFIPECPDSSKLLLHISAVDPEDSAVYFCASSHGQGVSGNTLYFGEGSRLIVV</sequence>
<accession>P01735</accession>
<dbReference type="PIR" id="A02004">
    <property type="entry name" value="RWMSV8"/>
</dbReference>
<dbReference type="SMR" id="P01735"/>
<dbReference type="FunCoup" id="P01735">
    <property type="interactions" value="862"/>
</dbReference>
<dbReference type="IntAct" id="P01735">
    <property type="interactions" value="1"/>
</dbReference>
<dbReference type="GlyGen" id="P01735">
    <property type="glycosylation" value="2 sites"/>
</dbReference>
<dbReference type="InParanoid" id="P01735"/>
<dbReference type="Proteomes" id="UP000000589">
    <property type="component" value="Unplaced"/>
</dbReference>
<dbReference type="RNAct" id="P01735">
    <property type="molecule type" value="protein"/>
</dbReference>
<dbReference type="GO" id="GO:0005886">
    <property type="term" value="C:plasma membrane"/>
    <property type="evidence" value="ECO:0000318"/>
    <property type="project" value="GO_Central"/>
</dbReference>
<dbReference type="GO" id="GO:0042101">
    <property type="term" value="C:T cell receptor complex"/>
    <property type="evidence" value="ECO:0007669"/>
    <property type="project" value="UniProtKB-KW"/>
</dbReference>
<dbReference type="GO" id="GO:0002250">
    <property type="term" value="P:adaptive immune response"/>
    <property type="evidence" value="ECO:0007669"/>
    <property type="project" value="UniProtKB-KW"/>
</dbReference>
<dbReference type="GO" id="GO:0007166">
    <property type="term" value="P:cell surface receptor signaling pathway"/>
    <property type="evidence" value="ECO:0000318"/>
    <property type="project" value="GO_Central"/>
</dbReference>
<dbReference type="CDD" id="cd05899">
    <property type="entry name" value="IgV_TCR_beta"/>
    <property type="match status" value="1"/>
</dbReference>
<dbReference type="Gene3D" id="2.60.40.10">
    <property type="entry name" value="Immunoglobulins"/>
    <property type="match status" value="1"/>
</dbReference>
<dbReference type="InterPro" id="IPR007110">
    <property type="entry name" value="Ig-like_dom"/>
</dbReference>
<dbReference type="InterPro" id="IPR036179">
    <property type="entry name" value="Ig-like_dom_sf"/>
</dbReference>
<dbReference type="InterPro" id="IPR013783">
    <property type="entry name" value="Ig-like_fold"/>
</dbReference>
<dbReference type="InterPro" id="IPR003599">
    <property type="entry name" value="Ig_sub"/>
</dbReference>
<dbReference type="InterPro" id="IPR013106">
    <property type="entry name" value="Ig_V-set"/>
</dbReference>
<dbReference type="InterPro" id="IPR050413">
    <property type="entry name" value="TCR_beta_variable"/>
</dbReference>
<dbReference type="PANTHER" id="PTHR23268:SF40">
    <property type="entry name" value="T CELL RECEPTOR BETA VARIABLE 4-1"/>
    <property type="match status" value="1"/>
</dbReference>
<dbReference type="PANTHER" id="PTHR23268">
    <property type="entry name" value="T-CELL RECEPTOR BETA CHAIN"/>
    <property type="match status" value="1"/>
</dbReference>
<dbReference type="Pfam" id="PF07686">
    <property type="entry name" value="V-set"/>
    <property type="match status" value="1"/>
</dbReference>
<dbReference type="SMART" id="SM00409">
    <property type="entry name" value="IG"/>
    <property type="match status" value="1"/>
</dbReference>
<dbReference type="SMART" id="SM00406">
    <property type="entry name" value="IGv"/>
    <property type="match status" value="1"/>
</dbReference>
<dbReference type="SUPFAM" id="SSF48726">
    <property type="entry name" value="Immunoglobulin"/>
    <property type="match status" value="1"/>
</dbReference>
<dbReference type="PROSITE" id="PS50835">
    <property type="entry name" value="IG_LIKE"/>
    <property type="match status" value="1"/>
</dbReference>
<proteinExistence type="predicted"/>
<name>TVB86_MOUSE</name>
<keyword id="KW-1064">Adaptive immunity</keyword>
<keyword id="KW-1015">Disulfide bond</keyword>
<keyword id="KW-0325">Glycoprotein</keyword>
<keyword id="KW-0391">Immunity</keyword>
<keyword id="KW-0393">Immunoglobulin domain</keyword>
<keyword id="KW-0675">Receptor</keyword>
<keyword id="KW-1185">Reference proteome</keyword>
<keyword id="KW-0732">Signal</keyword>
<keyword id="KW-1279">T cell receptor</keyword>
<organism>
    <name type="scientific">Mus musculus</name>
    <name type="common">Mouse</name>
    <dbReference type="NCBI Taxonomy" id="10090"/>
    <lineage>
        <taxon>Eukaryota</taxon>
        <taxon>Metazoa</taxon>
        <taxon>Chordata</taxon>
        <taxon>Craniata</taxon>
        <taxon>Vertebrata</taxon>
        <taxon>Euteleostomi</taxon>
        <taxon>Mammalia</taxon>
        <taxon>Eutheria</taxon>
        <taxon>Euarchontoglires</taxon>
        <taxon>Glires</taxon>
        <taxon>Rodentia</taxon>
        <taxon>Myomorpha</taxon>
        <taxon>Muroidea</taxon>
        <taxon>Muridae</taxon>
        <taxon>Murinae</taxon>
        <taxon>Mus</taxon>
        <taxon>Mus</taxon>
    </lineage>
</organism>
<feature type="signal peptide">
    <location>
        <begin position="1"/>
        <end position="21"/>
    </location>
</feature>
<feature type="chain" id="PRO_0000033600" description="T-cell receptor beta chain V region 86T1">
    <location>
        <begin position="22"/>
        <end position="133"/>
    </location>
</feature>
<feature type="region of interest" description="V segment">
    <location>
        <begin position="22"/>
        <end position="113"/>
    </location>
</feature>
<feature type="region of interest" description="J segment">
    <location>
        <begin position="114"/>
        <end position="133"/>
    </location>
</feature>
<feature type="glycosylation site" description="N-linked (GlcNAc...) asparagine" evidence="1">
    <location>
        <position position="36"/>
    </location>
</feature>
<feature type="glycosylation site" description="N-linked (GlcNAc...) asparagine" evidence="1">
    <location>
        <position position="75"/>
    </location>
</feature>
<feature type="disulfide bond" evidence="2">
    <location>
        <begin position="41"/>
        <end position="109"/>
    </location>
</feature>
<feature type="non-terminal residue">
    <location>
        <position position="133"/>
    </location>
</feature>
<reference key="1">
    <citation type="journal article" date="1984" name="Nature">
        <title>Sequence relationships between putative T-cell receptor polypeptides and immunoglobulins.</title>
        <authorList>
            <person name="Hedrick S.M."/>
            <person name="Nielsen E.A."/>
            <person name="Kavaler J."/>
            <person name="Cohen D.I."/>
            <person name="Davis M.M."/>
        </authorList>
    </citation>
    <scope>NUCLEOTIDE SEQUENCE</scope>
    <source>
        <strain>BALB/cJ</strain>
    </source>
</reference>
<protein>
    <recommendedName>
        <fullName>T-cell receptor beta chain V region 86T1</fullName>
    </recommendedName>
</protein>
<evidence type="ECO:0000255" key="1"/>
<evidence type="ECO:0000255" key="2">
    <source>
        <dbReference type="PROSITE-ProRule" id="PRU00114"/>
    </source>
</evidence>